<gene>
    <name evidence="1" type="primary">murB</name>
    <name type="ordered locus">RB2661</name>
</gene>
<proteinExistence type="inferred from homology"/>
<reference key="1">
    <citation type="journal article" date="2003" name="Proc. Natl. Acad. Sci. U.S.A.">
        <title>Complete genome sequence of the marine planctomycete Pirellula sp. strain 1.</title>
        <authorList>
            <person name="Gloeckner F.O."/>
            <person name="Kube M."/>
            <person name="Bauer M."/>
            <person name="Teeling H."/>
            <person name="Lombardot T."/>
            <person name="Ludwig W."/>
            <person name="Gade D."/>
            <person name="Beck A."/>
            <person name="Borzym K."/>
            <person name="Heitmann K."/>
            <person name="Rabus R."/>
            <person name="Schlesner H."/>
            <person name="Amann R."/>
            <person name="Reinhardt R."/>
        </authorList>
    </citation>
    <scope>NUCLEOTIDE SEQUENCE [LARGE SCALE GENOMIC DNA]</scope>
    <source>
        <strain>DSM 10527 / NCIMB 13988 / SH1</strain>
    </source>
</reference>
<name>MURB_RHOBA</name>
<accession>Q7UVF9</accession>
<organism>
    <name type="scientific">Rhodopirellula baltica (strain DSM 10527 / NCIMB 13988 / SH1)</name>
    <dbReference type="NCBI Taxonomy" id="243090"/>
    <lineage>
        <taxon>Bacteria</taxon>
        <taxon>Pseudomonadati</taxon>
        <taxon>Planctomycetota</taxon>
        <taxon>Planctomycetia</taxon>
        <taxon>Pirellulales</taxon>
        <taxon>Pirellulaceae</taxon>
        <taxon>Rhodopirellula</taxon>
    </lineage>
</organism>
<keyword id="KW-0131">Cell cycle</keyword>
<keyword id="KW-0132">Cell division</keyword>
<keyword id="KW-0133">Cell shape</keyword>
<keyword id="KW-0961">Cell wall biogenesis/degradation</keyword>
<keyword id="KW-0963">Cytoplasm</keyword>
<keyword id="KW-0274">FAD</keyword>
<keyword id="KW-0285">Flavoprotein</keyword>
<keyword id="KW-0521">NADP</keyword>
<keyword id="KW-0560">Oxidoreductase</keyword>
<keyword id="KW-0573">Peptidoglycan synthesis</keyword>
<keyword id="KW-1185">Reference proteome</keyword>
<evidence type="ECO:0000255" key="1">
    <source>
        <dbReference type="HAMAP-Rule" id="MF_00037"/>
    </source>
</evidence>
<evidence type="ECO:0000305" key="2"/>
<sequence>MNDVSSAPSESLTEYFPEDLLHVVRENQPLRETLWLGIGGPARFLAEPVEIDQIEKLYTAAREKQLALRVLGQGSNVLVREAGFDGLVIKLSAPATSGLEIQGQKLVAGAGAKLTHAVIKTVGEGLGGLEHLVGIPGSIGAAVVGNVSAEGRDIGSVVESIEIIDEEGKRKTLTGDEAGFAHRQSTLMGTVVLSVTFNLEPKDVSALTKRMQKLWIHRGQRRPSESNRIAMPFIDPDSISACELINSTGLAGIREGDVSLDSAAPHYLIAHENATSDQCVKLIGRVREQVLMQTGIDLQLNLQIW</sequence>
<comment type="function">
    <text evidence="1">Cell wall formation.</text>
</comment>
<comment type="catalytic activity">
    <reaction evidence="1">
        <text>UDP-N-acetyl-alpha-D-muramate + NADP(+) = UDP-N-acetyl-3-O-(1-carboxyvinyl)-alpha-D-glucosamine + NADPH + H(+)</text>
        <dbReference type="Rhea" id="RHEA:12248"/>
        <dbReference type="ChEBI" id="CHEBI:15378"/>
        <dbReference type="ChEBI" id="CHEBI:57783"/>
        <dbReference type="ChEBI" id="CHEBI:58349"/>
        <dbReference type="ChEBI" id="CHEBI:68483"/>
        <dbReference type="ChEBI" id="CHEBI:70757"/>
        <dbReference type="EC" id="1.3.1.98"/>
    </reaction>
</comment>
<comment type="cofactor">
    <cofactor evidence="1">
        <name>FAD</name>
        <dbReference type="ChEBI" id="CHEBI:57692"/>
    </cofactor>
</comment>
<comment type="pathway">
    <text evidence="1">Cell wall biogenesis; peptidoglycan biosynthesis.</text>
</comment>
<comment type="subcellular location">
    <subcellularLocation>
        <location evidence="1">Cytoplasm</location>
    </subcellularLocation>
</comment>
<comment type="similarity">
    <text evidence="1">Belongs to the MurB family.</text>
</comment>
<comment type="caution">
    <text evidence="2">This protein is missing some of the active site residues.</text>
</comment>
<comment type="sequence caution" evidence="2">
    <conflict type="erroneous initiation">
        <sequence resource="EMBL-CDS" id="CAD72765"/>
    </conflict>
</comment>
<feature type="chain" id="PRO_0000179248" description="UDP-N-acetylenolpyruvoylglucosamine reductase">
    <location>
        <begin position="1"/>
        <end position="305"/>
    </location>
</feature>
<feature type="domain" description="FAD-binding PCMH-type" evidence="1">
    <location>
        <begin position="37"/>
        <end position="202"/>
    </location>
</feature>
<feature type="active site" evidence="1">
    <location>
        <position position="183"/>
    </location>
</feature>
<protein>
    <recommendedName>
        <fullName evidence="1">UDP-N-acetylenolpyruvoylglucosamine reductase</fullName>
        <ecNumber evidence="1">1.3.1.98</ecNumber>
    </recommendedName>
    <alternativeName>
        <fullName evidence="1">UDP-N-acetylmuramate dehydrogenase</fullName>
    </alternativeName>
</protein>
<dbReference type="EC" id="1.3.1.98" evidence="1"/>
<dbReference type="EMBL" id="BX294137">
    <property type="protein sequence ID" value="CAD72765.1"/>
    <property type="status" value="ALT_INIT"/>
    <property type="molecule type" value="Genomic_DNA"/>
</dbReference>
<dbReference type="RefSeq" id="NP_865081.1">
    <property type="nucleotide sequence ID" value="NC_005027.1"/>
</dbReference>
<dbReference type="RefSeq" id="WP_007324328.1">
    <property type="nucleotide sequence ID" value="NC_005027.1"/>
</dbReference>
<dbReference type="SMR" id="Q7UVF9"/>
<dbReference type="STRING" id="243090.RB2661"/>
<dbReference type="EnsemblBacteria" id="CAD72765">
    <property type="protein sequence ID" value="CAD72765"/>
    <property type="gene ID" value="RB2661"/>
</dbReference>
<dbReference type="KEGG" id="rba:RB2661"/>
<dbReference type="PATRIC" id="fig|243090.15.peg.1222"/>
<dbReference type="eggNOG" id="COG0812">
    <property type="taxonomic scope" value="Bacteria"/>
</dbReference>
<dbReference type="HOGENOM" id="CLU_035304_1_1_0"/>
<dbReference type="InParanoid" id="Q7UVF9"/>
<dbReference type="OrthoDB" id="9804753at2"/>
<dbReference type="UniPathway" id="UPA00219"/>
<dbReference type="Proteomes" id="UP000001025">
    <property type="component" value="Chromosome"/>
</dbReference>
<dbReference type="GO" id="GO:0005829">
    <property type="term" value="C:cytosol"/>
    <property type="evidence" value="ECO:0000318"/>
    <property type="project" value="GO_Central"/>
</dbReference>
<dbReference type="GO" id="GO:0071949">
    <property type="term" value="F:FAD binding"/>
    <property type="evidence" value="ECO:0007669"/>
    <property type="project" value="InterPro"/>
</dbReference>
<dbReference type="GO" id="GO:0050660">
    <property type="term" value="F:flavin adenine dinucleotide binding"/>
    <property type="evidence" value="ECO:0000318"/>
    <property type="project" value="GO_Central"/>
</dbReference>
<dbReference type="GO" id="GO:0008762">
    <property type="term" value="F:UDP-N-acetylmuramate dehydrogenase activity"/>
    <property type="evidence" value="ECO:0000318"/>
    <property type="project" value="GO_Central"/>
</dbReference>
<dbReference type="GO" id="GO:0051301">
    <property type="term" value="P:cell division"/>
    <property type="evidence" value="ECO:0007669"/>
    <property type="project" value="UniProtKB-KW"/>
</dbReference>
<dbReference type="GO" id="GO:0071555">
    <property type="term" value="P:cell wall organization"/>
    <property type="evidence" value="ECO:0000318"/>
    <property type="project" value="GO_Central"/>
</dbReference>
<dbReference type="GO" id="GO:0009252">
    <property type="term" value="P:peptidoglycan biosynthetic process"/>
    <property type="evidence" value="ECO:0007669"/>
    <property type="project" value="UniProtKB-UniRule"/>
</dbReference>
<dbReference type="GO" id="GO:0008360">
    <property type="term" value="P:regulation of cell shape"/>
    <property type="evidence" value="ECO:0007669"/>
    <property type="project" value="UniProtKB-KW"/>
</dbReference>
<dbReference type="Gene3D" id="3.30.465.10">
    <property type="match status" value="1"/>
</dbReference>
<dbReference type="Gene3D" id="3.90.78.10">
    <property type="entry name" value="UDP-N-acetylenolpyruvoylglucosamine reductase, C-terminal domain"/>
    <property type="match status" value="1"/>
</dbReference>
<dbReference type="Gene3D" id="3.30.43.10">
    <property type="entry name" value="Uridine Diphospho-n-acetylenolpyruvylglucosamine Reductase, domain 2"/>
    <property type="match status" value="1"/>
</dbReference>
<dbReference type="HAMAP" id="MF_00037">
    <property type="entry name" value="MurB"/>
    <property type="match status" value="1"/>
</dbReference>
<dbReference type="InterPro" id="IPR016166">
    <property type="entry name" value="FAD-bd_PCMH"/>
</dbReference>
<dbReference type="InterPro" id="IPR036318">
    <property type="entry name" value="FAD-bd_PCMH-like_sf"/>
</dbReference>
<dbReference type="InterPro" id="IPR016167">
    <property type="entry name" value="FAD-bd_PCMH_sub1"/>
</dbReference>
<dbReference type="InterPro" id="IPR016169">
    <property type="entry name" value="FAD-bd_PCMH_sub2"/>
</dbReference>
<dbReference type="InterPro" id="IPR003170">
    <property type="entry name" value="MurB"/>
</dbReference>
<dbReference type="InterPro" id="IPR011601">
    <property type="entry name" value="MurB_C"/>
</dbReference>
<dbReference type="InterPro" id="IPR036635">
    <property type="entry name" value="MurB_C_sf"/>
</dbReference>
<dbReference type="InterPro" id="IPR006094">
    <property type="entry name" value="Oxid_FAD_bind_N"/>
</dbReference>
<dbReference type="PANTHER" id="PTHR21071">
    <property type="entry name" value="UDP-N-ACETYLENOLPYRUVOYLGLUCOSAMINE REDUCTASE"/>
    <property type="match status" value="1"/>
</dbReference>
<dbReference type="PANTHER" id="PTHR21071:SF4">
    <property type="entry name" value="UDP-N-ACETYLENOLPYRUVOYLGLUCOSAMINE REDUCTASE"/>
    <property type="match status" value="1"/>
</dbReference>
<dbReference type="Pfam" id="PF01565">
    <property type="entry name" value="FAD_binding_4"/>
    <property type="match status" value="1"/>
</dbReference>
<dbReference type="Pfam" id="PF02873">
    <property type="entry name" value="MurB_C"/>
    <property type="match status" value="1"/>
</dbReference>
<dbReference type="SUPFAM" id="SSF56176">
    <property type="entry name" value="FAD-binding/transporter-associated domain-like"/>
    <property type="match status" value="1"/>
</dbReference>
<dbReference type="SUPFAM" id="SSF56194">
    <property type="entry name" value="Uridine diphospho-N-Acetylenolpyruvylglucosamine reductase, MurB, C-terminal domain"/>
    <property type="match status" value="1"/>
</dbReference>
<dbReference type="PROSITE" id="PS51387">
    <property type="entry name" value="FAD_PCMH"/>
    <property type="match status" value="1"/>
</dbReference>